<protein>
    <recommendedName>
        <fullName evidence="3">Oligopeptide transport ATP-binding protein OppF</fullName>
        <ecNumber evidence="1">7.4.2.6</ecNumber>
    </recommendedName>
</protein>
<name>OPPF_MYCGE</name>
<accession>P47326</accession>
<accession>Q49263</accession>
<proteinExistence type="inferred from homology"/>
<evidence type="ECO:0000250" key="1">
    <source>
        <dbReference type="UniProtKB" id="P24137"/>
    </source>
</evidence>
<evidence type="ECO:0000255" key="2">
    <source>
        <dbReference type="PROSITE-ProRule" id="PRU00434"/>
    </source>
</evidence>
<evidence type="ECO:0000305" key="3"/>
<sequence length="848" mass="98828">MENQNTKKPLVNVKALSMMFKVRGTLFKALDEIGFTVNEGDFFGVIGESGSGKSTTGKCLIRLNIPSGGKIEIANHLLSGKKLTKENNQWLKQNIQMVFQDPYSSINPTKNVLTVISEPLVISKTVFGETKQYLKSLQKLSFKVKKTLLRNDIELETKFHNNFFKTVIKQINESLFNFEDLDYKDLKPSHLRQRIINETDKFIEKIRSEFALFYDFYANQSVPLQKALDDANSSLTPSSVIELKNQLKALQKQAKISKAAWDILQALKQNQKELKDYENYVHFELQKKPRIYLNTWLLTTKSYIKDSKQNMQLTDDIFAFSYNSMVDKKRNLVLILSKYYKLLPYFYDQSVFDNADQFDEIANLIFFDLVETLLGVTSLFNDALAADKVPLIKFAKFLNKLCDLRFLTLKKSFKKTRVSCSFSFNSEPEILFANSCYDLQQMPQIIKPFWEKLFNEQNYQKIIDSVSRLNVMIANYITKAFEIKKTIDEKLREFKQQNLALKKAYSANKKSEANKASINELKVNLKTLKKQLKQEKNTTKKQSKKELKPLLKEHHTALKLHDEFNHDLRKWFKKLNFMVKKYNRLENSQKKFCLVKKLKALFKKQDETLQSELRPKLKTFGVINFEYKRAVKESNVFRLVHFAKNIFKPFLFFNLTKIFMRNKVYEALDSVGLKREHAYRYPHEFSGGQRQRIAIARALITKPKLIIADELISALDVSIQAQVINILKDLAKKHNLTVLFIAHDLSMVQTVCNRLIIMHRGKIVERGSVDEIFSNPVHPYTRSLIKASPKLSKINVDLASFDENFTYDSDYSLTNMPFYIKVPNSEEHELYCTQKQFDSWIKEATPIN</sequence>
<reference key="1">
    <citation type="journal article" date="1995" name="Science">
        <title>The minimal gene complement of Mycoplasma genitalium.</title>
        <authorList>
            <person name="Fraser C.M."/>
            <person name="Gocayne J.D."/>
            <person name="White O."/>
            <person name="Adams M.D."/>
            <person name="Clayton R.A."/>
            <person name="Fleischmann R.D."/>
            <person name="Bult C.J."/>
            <person name="Kerlavage A.R."/>
            <person name="Sutton G.G."/>
            <person name="Kelley J.M."/>
            <person name="Fritchman J.L."/>
            <person name="Weidman J.F."/>
            <person name="Small K.V."/>
            <person name="Sandusky M."/>
            <person name="Fuhrmann J.L."/>
            <person name="Nguyen D.T."/>
            <person name="Utterback T.R."/>
            <person name="Saudek D.M."/>
            <person name="Phillips C.A."/>
            <person name="Merrick J.M."/>
            <person name="Tomb J.-F."/>
            <person name="Dougherty B.A."/>
            <person name="Bott K.F."/>
            <person name="Hu P.-C."/>
            <person name="Lucier T.S."/>
            <person name="Peterson S.N."/>
            <person name="Smith H.O."/>
            <person name="Hutchison C.A. III"/>
            <person name="Venter J.C."/>
        </authorList>
    </citation>
    <scope>NUCLEOTIDE SEQUENCE [LARGE SCALE GENOMIC DNA]</scope>
    <source>
        <strain>ATCC 33530 / DSM 19775 / NCTC 10195 / G37</strain>
    </source>
</reference>
<reference key="2">
    <citation type="journal article" date="1993" name="J. Bacteriol.">
        <title>A survey of the Mycoplasma genitalium genome by using random sequencing.</title>
        <authorList>
            <person name="Peterson S.N."/>
            <person name="Hu P.-C."/>
            <person name="Bott K.F."/>
            <person name="Hutchison C.A. III"/>
        </authorList>
    </citation>
    <scope>NUCLEOTIDE SEQUENCE [GENOMIC DNA] OF 216-317 AND 652-756</scope>
    <source>
        <strain>ATCC 33530 / DSM 19775 / NCTC 10195 / G37</strain>
    </source>
</reference>
<dbReference type="EC" id="7.4.2.6" evidence="1"/>
<dbReference type="EMBL" id="L43967">
    <property type="protein sequence ID" value="AAC71298.1"/>
    <property type="molecule type" value="Genomic_DNA"/>
</dbReference>
<dbReference type="EMBL" id="U01758">
    <property type="protein sequence ID" value="AAD10572.1"/>
    <property type="molecule type" value="Genomic_DNA"/>
</dbReference>
<dbReference type="EMBL" id="U02129">
    <property type="protein sequence ID" value="AAD12407.1"/>
    <property type="molecule type" value="Genomic_DNA"/>
</dbReference>
<dbReference type="PIR" id="H64208">
    <property type="entry name" value="H64208"/>
</dbReference>
<dbReference type="RefSeq" id="WP_009885637.1">
    <property type="nucleotide sequence ID" value="NC_000908.2"/>
</dbReference>
<dbReference type="FunCoup" id="P47326">
    <property type="interactions" value="91"/>
</dbReference>
<dbReference type="STRING" id="243273.MG_080"/>
<dbReference type="GeneID" id="88282203"/>
<dbReference type="KEGG" id="mge:MG_080"/>
<dbReference type="eggNOG" id="COG4608">
    <property type="taxonomic scope" value="Bacteria"/>
</dbReference>
<dbReference type="HOGENOM" id="CLU_016927_0_0_14"/>
<dbReference type="InParanoid" id="P47326"/>
<dbReference type="OrthoDB" id="400883at2"/>
<dbReference type="BioCyc" id="MGEN243273:G1GJ2-92-MONOMER"/>
<dbReference type="Proteomes" id="UP000000807">
    <property type="component" value="Chromosome"/>
</dbReference>
<dbReference type="GO" id="GO:0005886">
    <property type="term" value="C:plasma membrane"/>
    <property type="evidence" value="ECO:0007669"/>
    <property type="project" value="UniProtKB-SubCell"/>
</dbReference>
<dbReference type="GO" id="GO:0005524">
    <property type="term" value="F:ATP binding"/>
    <property type="evidence" value="ECO:0007669"/>
    <property type="project" value="UniProtKB-KW"/>
</dbReference>
<dbReference type="GO" id="GO:0016887">
    <property type="term" value="F:ATP hydrolysis activity"/>
    <property type="evidence" value="ECO:0007669"/>
    <property type="project" value="InterPro"/>
</dbReference>
<dbReference type="GO" id="GO:0015833">
    <property type="term" value="P:peptide transport"/>
    <property type="evidence" value="ECO:0007669"/>
    <property type="project" value="UniProtKB-KW"/>
</dbReference>
<dbReference type="GO" id="GO:0015031">
    <property type="term" value="P:protein transport"/>
    <property type="evidence" value="ECO:0007669"/>
    <property type="project" value="UniProtKB-KW"/>
</dbReference>
<dbReference type="Gene3D" id="3.40.50.300">
    <property type="entry name" value="P-loop containing nucleotide triphosphate hydrolases"/>
    <property type="match status" value="2"/>
</dbReference>
<dbReference type="InterPro" id="IPR050319">
    <property type="entry name" value="ABC_transp_ATP-bind"/>
</dbReference>
<dbReference type="InterPro" id="IPR003439">
    <property type="entry name" value="ABC_transporter-like_ATP-bd"/>
</dbReference>
<dbReference type="InterPro" id="IPR017871">
    <property type="entry name" value="ABC_transporter-like_CS"/>
</dbReference>
<dbReference type="InterPro" id="IPR013563">
    <property type="entry name" value="Oligopep_ABC_C"/>
</dbReference>
<dbReference type="InterPro" id="IPR027417">
    <property type="entry name" value="P-loop_NTPase"/>
</dbReference>
<dbReference type="PANTHER" id="PTHR43776:SF7">
    <property type="entry name" value="D,D-DIPEPTIDE TRANSPORT ATP-BINDING PROTEIN DDPF-RELATED"/>
    <property type="match status" value="1"/>
</dbReference>
<dbReference type="PANTHER" id="PTHR43776">
    <property type="entry name" value="TRANSPORT ATP-BINDING PROTEIN"/>
    <property type="match status" value="1"/>
</dbReference>
<dbReference type="Pfam" id="PF00005">
    <property type="entry name" value="ABC_tran"/>
    <property type="match status" value="2"/>
</dbReference>
<dbReference type="Pfam" id="PF08352">
    <property type="entry name" value="oligo_HPY"/>
    <property type="match status" value="1"/>
</dbReference>
<dbReference type="SUPFAM" id="SSF52540">
    <property type="entry name" value="P-loop containing nucleoside triphosphate hydrolases"/>
    <property type="match status" value="1"/>
</dbReference>
<dbReference type="PROSITE" id="PS00211">
    <property type="entry name" value="ABC_TRANSPORTER_1"/>
    <property type="match status" value="1"/>
</dbReference>
<dbReference type="PROSITE" id="PS50893">
    <property type="entry name" value="ABC_TRANSPORTER_2"/>
    <property type="match status" value="1"/>
</dbReference>
<comment type="function">
    <text evidence="1">Part of the ABC transporter complex OppABCDF involved in the uptake of oligopeptides (By similarity). Probably responsible for energy coupling to the transport system (By similarity).</text>
</comment>
<comment type="catalytic activity">
    <reaction evidence="1">
        <text>a [peptide](out) + ATP + H2O = a [peptide](in) + ADP + phosphate + H(+)</text>
        <dbReference type="Rhea" id="RHEA:78459"/>
        <dbReference type="Rhea" id="RHEA-COMP:19083"/>
        <dbReference type="ChEBI" id="CHEBI:15377"/>
        <dbReference type="ChEBI" id="CHEBI:15378"/>
        <dbReference type="ChEBI" id="CHEBI:30616"/>
        <dbReference type="ChEBI" id="CHEBI:33710"/>
        <dbReference type="ChEBI" id="CHEBI:43474"/>
        <dbReference type="ChEBI" id="CHEBI:456216"/>
        <dbReference type="EC" id="7.4.2.6"/>
    </reaction>
    <physiologicalReaction direction="left-to-right" evidence="1">
        <dbReference type="Rhea" id="RHEA:78460"/>
    </physiologicalReaction>
</comment>
<comment type="subunit">
    <text evidence="1">The complex is composed of two ATP-binding proteins (OppD and OppF), two transmembrane proteins (OppB and OppC) and a solute-binding protein (OppA).</text>
</comment>
<comment type="subcellular location">
    <subcellularLocation>
        <location evidence="1">Cell membrane</location>
        <topology evidence="1">Peripheral membrane protein</topology>
    </subcellularLocation>
</comment>
<comment type="similarity">
    <text evidence="3">Belongs to the ABC transporter superfamily.</text>
</comment>
<organism>
    <name type="scientific">Mycoplasma genitalium (strain ATCC 33530 / DSM 19775 / NCTC 10195 / G37)</name>
    <name type="common">Mycoplasmoides genitalium</name>
    <dbReference type="NCBI Taxonomy" id="243273"/>
    <lineage>
        <taxon>Bacteria</taxon>
        <taxon>Bacillati</taxon>
        <taxon>Mycoplasmatota</taxon>
        <taxon>Mycoplasmoidales</taxon>
        <taxon>Mycoplasmoidaceae</taxon>
        <taxon>Mycoplasmoides</taxon>
    </lineage>
</organism>
<gene>
    <name type="primary">oppF</name>
    <name type="ordered locus">MG080</name>
</gene>
<keyword id="KW-0067">ATP-binding</keyword>
<keyword id="KW-1003">Cell membrane</keyword>
<keyword id="KW-0472">Membrane</keyword>
<keyword id="KW-0547">Nucleotide-binding</keyword>
<keyword id="KW-0571">Peptide transport</keyword>
<keyword id="KW-0653">Protein transport</keyword>
<keyword id="KW-1185">Reference proteome</keyword>
<keyword id="KW-1278">Translocase</keyword>
<keyword id="KW-0813">Transport</keyword>
<feature type="chain" id="PRO_0000092669" description="Oligopeptide transport ATP-binding protein OppF">
    <location>
        <begin position="1"/>
        <end position="848"/>
    </location>
</feature>
<feature type="domain" description="ABC transporter" evidence="2">
    <location>
        <begin position="13"/>
        <end position="785"/>
    </location>
</feature>
<feature type="binding site" evidence="2">
    <location>
        <begin position="47"/>
        <end position="54"/>
    </location>
    <ligand>
        <name>ATP</name>
        <dbReference type="ChEBI" id="CHEBI:30616"/>
    </ligand>
</feature>
<feature type="sequence conflict" description="In Ref. 2; AAD12407." evidence="3" ref="2">
    <original>A</original>
    <variation>S</variation>
    <location>
        <position position="678"/>
    </location>
</feature>